<reference key="1">
    <citation type="journal article" date="2015" name="Genome Announc.">
        <title>Draft genome sequence of the cellulolytic fungus Chaetomium globosum.</title>
        <authorList>
            <person name="Cuomo C.A."/>
            <person name="Untereiner W.A."/>
            <person name="Ma L.-J."/>
            <person name="Grabherr M."/>
            <person name="Birren B.W."/>
        </authorList>
    </citation>
    <scope>NUCLEOTIDE SEQUENCE [LARGE SCALE GENOMIC DNA]</scope>
    <source>
        <strain>ATCC 6205 / CBS 148.51 / DSM 1962 / NBRC 6347 / NRRL 1970</strain>
    </source>
</reference>
<sequence>MAPAGLLQTSLIWVAYGVAVALVLLVSVITTLTWQTPHERSIAVSIVSIISLTALLATVFLLPVDIALVSSTASAHLGAKKDWATPGRVDGILLTLKIVYYTLYTLDALLCLIVIPFTYFWFEEYDEVEEEEGTSSAAARIWRALKYTLGFVFLVVILFLIGFFVPAAGNNPGKHMDLDYFKRLLAANNGEKALTFGVGLLITLGTLLYILYTSAGLALLPVSFIKSAPSISAPQLSATTASALEHNRELQRQLEMRNSGRPEGMSQKDRREMDALLREERTLVRRERLAAEARGDNRSKIYRAWTKVEAVFRPLKLLGGIFLLLLAILIWVSMLITGIDKAANSICKQHCGYILGHLNVFQPINWIFVQSAKAFPVDYILMALLVLLFFSSSITGLATIGIRFLWVRIFQLKKGRTAPQALLIATVLLGPHDPRHQLRGRHARGAAVRHLRHADLLRQPAAATRASSPTAASTATWCAPAPRPSASPAAIGRLHADRHVHLPQPRPPSNWPRLRRPSTSGPSSSSSPSSSSSSSPASSRTPRLNLSELDEEAEVDERGGPAGPAPAAALARPGAISPAAPRRTPPRRARRVMARRLGTRMGVGRARGVKLNGGAATENDKKEKKNGTWVWAWVWEWEWQTDWLAE</sequence>
<gene>
    <name type="ORF">CHGG_01714</name>
</gene>
<name>LMBD1_CHAGB</name>
<protein>
    <recommendedName>
        <fullName>Probable lysosomal cobalamin transporter</fullName>
    </recommendedName>
</protein>
<organism>
    <name type="scientific">Chaetomium globosum (strain ATCC 6205 / CBS 148.51 / DSM 1962 / NBRC 6347 / NRRL 1970)</name>
    <name type="common">Soil fungus</name>
    <dbReference type="NCBI Taxonomy" id="306901"/>
    <lineage>
        <taxon>Eukaryota</taxon>
        <taxon>Fungi</taxon>
        <taxon>Dikarya</taxon>
        <taxon>Ascomycota</taxon>
        <taxon>Pezizomycotina</taxon>
        <taxon>Sordariomycetes</taxon>
        <taxon>Sordariomycetidae</taxon>
        <taxon>Sordariales</taxon>
        <taxon>Chaetomiaceae</taxon>
        <taxon>Chaetomium</taxon>
    </lineage>
</organism>
<evidence type="ECO:0000250" key="1"/>
<evidence type="ECO:0000255" key="2"/>
<evidence type="ECO:0000256" key="3">
    <source>
        <dbReference type="SAM" id="MobiDB-lite"/>
    </source>
</evidence>
<evidence type="ECO:0000305" key="4"/>
<accession>Q2HDJ0</accession>
<comment type="function">
    <text evidence="1">Probable lysosomal cobalamin transporter. Required to export cobalamin from lysosomes allowing its conversion to cofactors (By similarity).</text>
</comment>
<comment type="subcellular location">
    <subcellularLocation>
        <location evidence="1">Lysosome membrane</location>
        <topology evidence="1">Multi-pass membrane protein</topology>
    </subcellularLocation>
</comment>
<comment type="similarity">
    <text evidence="4">Belongs to the LIMR family. LMBRD1 subfamily.</text>
</comment>
<proteinExistence type="inferred from homology"/>
<dbReference type="EMBL" id="CH408029">
    <property type="protein sequence ID" value="EAQ93479.1"/>
    <property type="molecule type" value="Genomic_DNA"/>
</dbReference>
<dbReference type="RefSeq" id="XP_001220935.1">
    <property type="nucleotide sequence ID" value="XM_001220934.1"/>
</dbReference>
<dbReference type="STRING" id="306901.Q2HDJ0"/>
<dbReference type="TCDB" id="9.A.54.1.2">
    <property type="family name" value="the lysosomal cobalamin (b12) transporter (l-b12t) family"/>
</dbReference>
<dbReference type="GeneID" id="4386940"/>
<dbReference type="VEuPathDB" id="FungiDB:CHGG_01714"/>
<dbReference type="eggNOG" id="ENOG502QQ2T">
    <property type="taxonomic scope" value="Eukaryota"/>
</dbReference>
<dbReference type="HOGENOM" id="CLU_028341_1_0_1"/>
<dbReference type="InParanoid" id="Q2HDJ0"/>
<dbReference type="OMA" id="TAERSCW"/>
<dbReference type="OrthoDB" id="73273at2759"/>
<dbReference type="Proteomes" id="UP000001056">
    <property type="component" value="Unassembled WGS sequence"/>
</dbReference>
<dbReference type="GO" id="GO:0005774">
    <property type="term" value="C:vacuolar membrane"/>
    <property type="evidence" value="ECO:0007669"/>
    <property type="project" value="TreeGrafter"/>
</dbReference>
<dbReference type="GO" id="GO:0031419">
    <property type="term" value="F:cobalamin binding"/>
    <property type="evidence" value="ECO:0007669"/>
    <property type="project" value="UniProtKB-KW"/>
</dbReference>
<dbReference type="GO" id="GO:0072665">
    <property type="term" value="P:protein localization to vacuole"/>
    <property type="evidence" value="ECO:0007669"/>
    <property type="project" value="TreeGrafter"/>
</dbReference>
<dbReference type="InterPro" id="IPR050854">
    <property type="entry name" value="LMBD1_LysCbl_Transport"/>
</dbReference>
<dbReference type="InterPro" id="IPR006876">
    <property type="entry name" value="LMBR1-like_membr_prot"/>
</dbReference>
<dbReference type="PANTHER" id="PTHR16130:SF2">
    <property type="entry name" value="LYSOSOMAL COBALAMIN TRANSPORT ESCORT PROTEIN LMBD1"/>
    <property type="match status" value="1"/>
</dbReference>
<dbReference type="PANTHER" id="PTHR16130">
    <property type="entry name" value="LYSOSOMAL COBALAMIN TRANSPORTER-RELATED"/>
    <property type="match status" value="1"/>
</dbReference>
<dbReference type="Pfam" id="PF04791">
    <property type="entry name" value="LMBR1"/>
    <property type="match status" value="1"/>
</dbReference>
<feature type="chain" id="PRO_0000365829" description="Probable lysosomal cobalamin transporter">
    <location>
        <begin position="1"/>
        <end position="646"/>
    </location>
</feature>
<feature type="transmembrane region" description="Helical" evidence="2">
    <location>
        <begin position="11"/>
        <end position="31"/>
    </location>
</feature>
<feature type="transmembrane region" description="Helical" evidence="2">
    <location>
        <begin position="42"/>
        <end position="62"/>
    </location>
</feature>
<feature type="transmembrane region" description="Helical" evidence="2">
    <location>
        <begin position="102"/>
        <end position="122"/>
    </location>
</feature>
<feature type="transmembrane region" description="Helical" evidence="2">
    <location>
        <begin position="149"/>
        <end position="169"/>
    </location>
</feature>
<feature type="transmembrane region" description="Helical" evidence="2">
    <location>
        <begin position="193"/>
        <end position="213"/>
    </location>
</feature>
<feature type="transmembrane region" description="Helical" evidence="2">
    <location>
        <begin position="317"/>
        <end position="337"/>
    </location>
</feature>
<feature type="transmembrane region" description="Helical" evidence="2">
    <location>
        <begin position="380"/>
        <end position="400"/>
    </location>
</feature>
<feature type="region of interest" description="Disordered" evidence="3">
    <location>
        <begin position="459"/>
        <end position="588"/>
    </location>
</feature>
<feature type="region of interest" description="Disordered" evidence="3">
    <location>
        <begin position="603"/>
        <end position="623"/>
    </location>
</feature>
<feature type="compositionally biased region" description="Low complexity" evidence="3">
    <location>
        <begin position="460"/>
        <end position="490"/>
    </location>
</feature>
<feature type="compositionally biased region" description="Low complexity" evidence="3">
    <location>
        <begin position="517"/>
        <end position="543"/>
    </location>
</feature>
<feature type="compositionally biased region" description="Low complexity" evidence="3">
    <location>
        <begin position="565"/>
        <end position="582"/>
    </location>
</feature>
<feature type="glycosylation site" description="N-linked (GlcNAc...) asparagine" evidence="2">
    <location>
        <position position="297"/>
    </location>
</feature>
<feature type="glycosylation site" description="N-linked (GlcNAc...) asparagine" evidence="2">
    <location>
        <position position="545"/>
    </location>
</feature>
<feature type="glycosylation site" description="N-linked (GlcNAc...) asparagine" evidence="2">
    <location>
        <position position="626"/>
    </location>
</feature>
<keyword id="KW-0846">Cobalamin</keyword>
<keyword id="KW-0170">Cobalt</keyword>
<keyword id="KW-0325">Glycoprotein</keyword>
<keyword id="KW-0458">Lysosome</keyword>
<keyword id="KW-0472">Membrane</keyword>
<keyword id="KW-1185">Reference proteome</keyword>
<keyword id="KW-0812">Transmembrane</keyword>
<keyword id="KW-1133">Transmembrane helix</keyword>
<keyword id="KW-0813">Transport</keyword>